<feature type="chain" id="PRO_0000319308" description="Small ribosomal subunit protein uS4">
    <location>
        <begin position="1"/>
        <end position="194"/>
    </location>
</feature>
<feature type="domain" description="S4 RNA-binding" evidence="3">
    <location>
        <begin position="108"/>
        <end position="182"/>
    </location>
</feature>
<feature type="region of interest" description="Disordered" evidence="4">
    <location>
        <begin position="162"/>
        <end position="194"/>
    </location>
</feature>
<feature type="modified residue" description="N6-acetyllysine" evidence="2">
    <location>
        <position position="66"/>
    </location>
</feature>
<feature type="modified residue" description="N6-acetyllysine" evidence="2">
    <location>
        <position position="116"/>
    </location>
</feature>
<feature type="modified residue" description="Phosphoserine" evidence="1">
    <location>
        <position position="153"/>
    </location>
</feature>
<feature type="modified residue" description="N6-acetyllysine" evidence="1">
    <location>
        <position position="155"/>
    </location>
</feature>
<feature type="modified residue" description="Phosphoserine" evidence="1">
    <location>
        <position position="163"/>
    </location>
</feature>
<feature type="cross-link" description="Glycyl lysine isopeptide (Lys-Gly) (interchain with G-Cter in SUMO2)" evidence="1">
    <location>
        <position position="93"/>
    </location>
</feature>
<feature type="cross-link" description="Glycyl lysine isopeptide (Lys-Gly) (interchain with G-Cter in SUMO2)" evidence="1">
    <location>
        <position position="139"/>
    </location>
</feature>
<organism>
    <name type="scientific">Papio anubis</name>
    <name type="common">Olive baboon</name>
    <dbReference type="NCBI Taxonomy" id="9555"/>
    <lineage>
        <taxon>Eukaryota</taxon>
        <taxon>Metazoa</taxon>
        <taxon>Chordata</taxon>
        <taxon>Craniata</taxon>
        <taxon>Vertebrata</taxon>
        <taxon>Euteleostomi</taxon>
        <taxon>Mammalia</taxon>
        <taxon>Eutheria</taxon>
        <taxon>Euarchontoglires</taxon>
        <taxon>Primates</taxon>
        <taxon>Haplorrhini</taxon>
        <taxon>Catarrhini</taxon>
        <taxon>Cercopithecidae</taxon>
        <taxon>Cercopithecinae</taxon>
        <taxon>Papio</taxon>
    </lineage>
</organism>
<reference key="1">
    <citation type="submission" date="2007-11" db="EMBL/GenBank/DDBJ databases">
        <title>NISC comparative sequencing initiative.</title>
        <authorList>
            <person name="Antonellis A."/>
            <person name="Benjamin B."/>
            <person name="Blakesley R.W."/>
            <person name="Bouffard G.G."/>
            <person name="Brinkley C."/>
            <person name="Brooks S."/>
            <person name="Chu G."/>
            <person name="Chub I."/>
            <person name="Coleman H."/>
            <person name="Fuksenko T."/>
            <person name="Gestole M."/>
            <person name="Gregory M."/>
            <person name="Guan X."/>
            <person name="Gupta J."/>
            <person name="Gurson N."/>
            <person name="Han E."/>
            <person name="Han J."/>
            <person name="Hansen N."/>
            <person name="Hargrove A."/>
            <person name="Hines-Harris K."/>
            <person name="Ho S.-L."/>
            <person name="Hu P."/>
            <person name="Hunter G."/>
            <person name="Hurle B."/>
            <person name="Idol J.R."/>
            <person name="Johnson T."/>
            <person name="Knight E."/>
            <person name="Kwong P."/>
            <person name="Lee-Lin S.-Q."/>
            <person name="Legaspi R."/>
            <person name="Madden M."/>
            <person name="Maduro Q.L."/>
            <person name="Maduro V.B."/>
            <person name="Margulies E.H."/>
            <person name="Masiello C."/>
            <person name="Maskeri B."/>
            <person name="McDowell J."/>
            <person name="Merkulov G."/>
            <person name="Montemayor C."/>
            <person name="Mullikin J.C."/>
            <person name="Park M."/>
            <person name="Prasad A."/>
            <person name="Ramsahoye C."/>
            <person name="Reddix-Dugue N."/>
            <person name="Riebow N."/>
            <person name="Schandler K."/>
            <person name="Schueler M.G."/>
            <person name="Sison C."/>
            <person name="Smith L."/>
            <person name="Stantripop S."/>
            <person name="Thomas J.W."/>
            <person name="Thomas P.J."/>
            <person name="Tsipouri V."/>
            <person name="Young A."/>
            <person name="Green E.D."/>
        </authorList>
    </citation>
    <scope>NUCLEOTIDE SEQUENCE [LARGE SCALE GENOMIC DNA]</scope>
</reference>
<keyword id="KW-0007">Acetylation</keyword>
<keyword id="KW-0963">Cytoplasm</keyword>
<keyword id="KW-1017">Isopeptide bond</keyword>
<keyword id="KW-0539">Nucleus</keyword>
<keyword id="KW-0597">Phosphoprotein</keyword>
<keyword id="KW-1185">Reference proteome</keyword>
<keyword id="KW-0687">Ribonucleoprotein</keyword>
<keyword id="KW-0689">Ribosomal protein</keyword>
<keyword id="KW-0694">RNA-binding</keyword>
<keyword id="KW-0699">rRNA-binding</keyword>
<keyword id="KW-0832">Ubl conjugation</keyword>
<protein>
    <recommendedName>
        <fullName evidence="5">Small ribosomal subunit protein uS4</fullName>
    </recommendedName>
    <alternativeName>
        <fullName>40S ribosomal protein S9</fullName>
    </alternativeName>
</protein>
<sequence>MPVARSWVCRKTYVTPRRPFEKSRLDQELKLIGEYGLRNKREVWRVKFTLAKIRKAARELLTLDEKDPRRLFEGNALLRRLVRIGVLDEGKMKLDYILGLKIEDFLERRLQTQVFKLGLAKSIHHARVLIRQRHIRVRKQVVNIPSFIVRLDSQKHIDFSLRSPYGGGRPGRVKRKNAKKGQGGAGAGDDEEED</sequence>
<name>RS9_PAPAN</name>
<gene>
    <name type="primary">RPS9</name>
</gene>
<proteinExistence type="inferred from homology"/>
<comment type="function">
    <text evidence="1">Component of the small ribosomal subunit. The ribosome is a large ribonucleoprotein complex responsible for the synthesis of proteins in the cell. Part of the small subunit (SSU) processome, first precursor of the small eukaryotic ribosomal subunit. During the assembly of the SSU processome in the nucleolus, many ribosome biogenesis factors, an RNA chaperone and ribosomal proteins associate with the nascent pre-rRNA and work in concert to generate RNA folding, modifications, rearrangements and cleavage as well as targeted degradation of pre-ribosomal RNA by the RNA exosome.</text>
</comment>
<comment type="subunit">
    <text evidence="1">Component of the small ribosomal subunit. Part of the small subunit (SSU) processome, composed of more than 70 proteins and the RNA chaperone small nucleolar RNA (snoRNA) U3.</text>
</comment>
<comment type="subcellular location">
    <subcellularLocation>
        <location evidence="1">Cytoplasm</location>
    </subcellularLocation>
    <subcellularLocation>
        <location evidence="1">Nucleus</location>
        <location evidence="1">Nucleolus</location>
    </subcellularLocation>
    <text evidence="1">Localized in cytoplasmic mRNP granules containing untranslated mRNAs.</text>
</comment>
<comment type="similarity">
    <text evidence="5">Belongs to the universal ribosomal protein uS4 family.</text>
</comment>
<dbReference type="EMBL" id="DP000506">
    <property type="protein sequence ID" value="ABX52176.1"/>
    <property type="molecule type" value="Genomic_DNA"/>
</dbReference>
<dbReference type="RefSeq" id="NP_001162349.1">
    <property type="nucleotide sequence ID" value="NM_001168878.1"/>
</dbReference>
<dbReference type="RefSeq" id="XP_031514860.1">
    <property type="nucleotide sequence ID" value="XM_031659000.1"/>
</dbReference>
<dbReference type="SMR" id="A9L913"/>
<dbReference type="STRING" id="9555.ENSPANP00000010323"/>
<dbReference type="Ensembl" id="ENSPANT00000010627.3">
    <property type="protein sequence ID" value="ENSPANP00000010323.3"/>
    <property type="gene ID" value="ENSPANG00000011359.3"/>
</dbReference>
<dbReference type="GeneID" id="100137341"/>
<dbReference type="KEGG" id="panu:100137341"/>
<dbReference type="CTD" id="6203"/>
<dbReference type="GeneTree" id="ENSGT00550000074829"/>
<dbReference type="OMA" id="RQFITHG"/>
<dbReference type="Proteomes" id="UP000028761">
    <property type="component" value="Chromosome 20"/>
</dbReference>
<dbReference type="GO" id="GO:0022627">
    <property type="term" value="C:cytosolic small ribosomal subunit"/>
    <property type="evidence" value="ECO:0007669"/>
    <property type="project" value="Ensembl"/>
</dbReference>
<dbReference type="GO" id="GO:0005730">
    <property type="term" value="C:nucleolus"/>
    <property type="evidence" value="ECO:0007669"/>
    <property type="project" value="UniProtKB-SubCell"/>
</dbReference>
<dbReference type="GO" id="GO:1990904">
    <property type="term" value="C:ribonucleoprotein complex"/>
    <property type="evidence" value="ECO:0000250"/>
    <property type="project" value="UniProtKB"/>
</dbReference>
<dbReference type="GO" id="GO:0032040">
    <property type="term" value="C:small-subunit processome"/>
    <property type="evidence" value="ECO:0000250"/>
    <property type="project" value="UniProtKB"/>
</dbReference>
<dbReference type="GO" id="GO:0045202">
    <property type="term" value="C:synapse"/>
    <property type="evidence" value="ECO:0007669"/>
    <property type="project" value="Ensembl"/>
</dbReference>
<dbReference type="GO" id="GO:0019843">
    <property type="term" value="F:rRNA binding"/>
    <property type="evidence" value="ECO:0007669"/>
    <property type="project" value="UniProtKB-KW"/>
</dbReference>
<dbReference type="GO" id="GO:0003735">
    <property type="term" value="F:structural constituent of ribosome"/>
    <property type="evidence" value="ECO:0007669"/>
    <property type="project" value="Ensembl"/>
</dbReference>
<dbReference type="GO" id="GO:0045182">
    <property type="term" value="F:translation regulator activity"/>
    <property type="evidence" value="ECO:0007669"/>
    <property type="project" value="Ensembl"/>
</dbReference>
<dbReference type="GO" id="GO:0008284">
    <property type="term" value="P:positive regulation of cell population proliferation"/>
    <property type="evidence" value="ECO:0007669"/>
    <property type="project" value="Ensembl"/>
</dbReference>
<dbReference type="GO" id="GO:0042274">
    <property type="term" value="P:ribosomal small subunit biogenesis"/>
    <property type="evidence" value="ECO:0000250"/>
    <property type="project" value="UniProtKB"/>
</dbReference>
<dbReference type="GO" id="GO:0006412">
    <property type="term" value="P:translation"/>
    <property type="evidence" value="ECO:0007669"/>
    <property type="project" value="Ensembl"/>
</dbReference>
<dbReference type="CDD" id="cd00165">
    <property type="entry name" value="S4"/>
    <property type="match status" value="1"/>
</dbReference>
<dbReference type="FunFam" id="3.10.290.10:FF:000021">
    <property type="entry name" value="40S ribosomal protein S9"/>
    <property type="match status" value="1"/>
</dbReference>
<dbReference type="Gene3D" id="3.10.290.10">
    <property type="entry name" value="RNA-binding S4 domain"/>
    <property type="match status" value="1"/>
</dbReference>
<dbReference type="InterPro" id="IPR022801">
    <property type="entry name" value="Ribosomal_uS4"/>
</dbReference>
<dbReference type="InterPro" id="IPR018079">
    <property type="entry name" value="Ribosomal_uS4_CS"/>
</dbReference>
<dbReference type="InterPro" id="IPR005710">
    <property type="entry name" value="Ribosomal_uS4_euk/arc"/>
</dbReference>
<dbReference type="InterPro" id="IPR001912">
    <property type="entry name" value="Ribosomal_uS4_N"/>
</dbReference>
<dbReference type="InterPro" id="IPR002942">
    <property type="entry name" value="S4_RNA-bd"/>
</dbReference>
<dbReference type="InterPro" id="IPR036986">
    <property type="entry name" value="S4_RNA-bd_sf"/>
</dbReference>
<dbReference type="NCBIfam" id="NF003139">
    <property type="entry name" value="PRK04051.1"/>
    <property type="match status" value="1"/>
</dbReference>
<dbReference type="NCBIfam" id="TIGR01018">
    <property type="entry name" value="uS4_arch"/>
    <property type="match status" value="1"/>
</dbReference>
<dbReference type="PANTHER" id="PTHR11831">
    <property type="entry name" value="30S 40S RIBOSOMAL PROTEIN"/>
    <property type="match status" value="1"/>
</dbReference>
<dbReference type="PANTHER" id="PTHR11831:SF46">
    <property type="entry name" value="SMALL RIBOSOMAL SUBUNIT PROTEIN US4"/>
    <property type="match status" value="1"/>
</dbReference>
<dbReference type="Pfam" id="PF00163">
    <property type="entry name" value="Ribosomal_S4"/>
    <property type="match status" value="1"/>
</dbReference>
<dbReference type="Pfam" id="PF01479">
    <property type="entry name" value="S4"/>
    <property type="match status" value="1"/>
</dbReference>
<dbReference type="SMART" id="SM01390">
    <property type="entry name" value="Ribosomal_S4"/>
    <property type="match status" value="1"/>
</dbReference>
<dbReference type="SMART" id="SM00363">
    <property type="entry name" value="S4"/>
    <property type="match status" value="1"/>
</dbReference>
<dbReference type="SUPFAM" id="SSF55174">
    <property type="entry name" value="Alpha-L RNA-binding motif"/>
    <property type="match status" value="1"/>
</dbReference>
<dbReference type="PROSITE" id="PS00632">
    <property type="entry name" value="RIBOSOMAL_S4"/>
    <property type="match status" value="1"/>
</dbReference>
<dbReference type="PROSITE" id="PS50889">
    <property type="entry name" value="S4"/>
    <property type="match status" value="1"/>
</dbReference>
<evidence type="ECO:0000250" key="1">
    <source>
        <dbReference type="UniProtKB" id="P46781"/>
    </source>
</evidence>
<evidence type="ECO:0000250" key="2">
    <source>
        <dbReference type="UniProtKB" id="Q6ZWN5"/>
    </source>
</evidence>
<evidence type="ECO:0000255" key="3">
    <source>
        <dbReference type="PROSITE-ProRule" id="PRU00182"/>
    </source>
</evidence>
<evidence type="ECO:0000256" key="4">
    <source>
        <dbReference type="SAM" id="MobiDB-lite"/>
    </source>
</evidence>
<evidence type="ECO:0000305" key="5"/>
<accession>A9L913</accession>